<dbReference type="EC" id="5.1.3.2" evidence="3"/>
<dbReference type="EC" id="5.1.3.7" evidence="1"/>
<dbReference type="EMBL" id="AAFI02000013">
    <property type="protein sequence ID" value="EAL69928.1"/>
    <property type="molecule type" value="Genomic_DNA"/>
</dbReference>
<dbReference type="RefSeq" id="XP_643834.1">
    <property type="nucleotide sequence ID" value="XM_638742.1"/>
</dbReference>
<dbReference type="SMR" id="Q553X7"/>
<dbReference type="FunCoup" id="Q553X7">
    <property type="interactions" value="51"/>
</dbReference>
<dbReference type="STRING" id="44689.Q553X7"/>
<dbReference type="PaxDb" id="44689-DDB0231575"/>
<dbReference type="EnsemblProtists" id="EAL69928">
    <property type="protein sequence ID" value="EAL69928"/>
    <property type="gene ID" value="DDB_G0275295"/>
</dbReference>
<dbReference type="GeneID" id="8619881"/>
<dbReference type="KEGG" id="ddi:DDB_G0275295"/>
<dbReference type="dictyBase" id="DDB_G0275295">
    <property type="gene designation" value="galE"/>
</dbReference>
<dbReference type="VEuPathDB" id="AmoebaDB:DDB_G0275295"/>
<dbReference type="eggNOG" id="KOG1371">
    <property type="taxonomic scope" value="Eukaryota"/>
</dbReference>
<dbReference type="HOGENOM" id="CLU_007383_1_10_1"/>
<dbReference type="InParanoid" id="Q553X7"/>
<dbReference type="OMA" id="GEHLICN"/>
<dbReference type="PhylomeDB" id="Q553X7"/>
<dbReference type="Reactome" id="R-DDI-70370">
    <property type="pathway name" value="Galactose catabolism"/>
</dbReference>
<dbReference type="UniPathway" id="UPA00214"/>
<dbReference type="PRO" id="PR:Q553X7"/>
<dbReference type="Proteomes" id="UP000002195">
    <property type="component" value="Chromosome 2"/>
</dbReference>
<dbReference type="GO" id="GO:0005829">
    <property type="term" value="C:cytosol"/>
    <property type="evidence" value="ECO:0000318"/>
    <property type="project" value="GO_Central"/>
</dbReference>
<dbReference type="GO" id="GO:0003978">
    <property type="term" value="F:UDP-glucose 4-epimerase activity"/>
    <property type="evidence" value="ECO:0000318"/>
    <property type="project" value="GO_Central"/>
</dbReference>
<dbReference type="GO" id="GO:0003974">
    <property type="term" value="F:UDP-N-acetylglucosamine 4-epimerase activity"/>
    <property type="evidence" value="ECO:0007669"/>
    <property type="project" value="UniProtKB-EC"/>
</dbReference>
<dbReference type="GO" id="GO:0006012">
    <property type="term" value="P:galactose metabolic process"/>
    <property type="evidence" value="ECO:0007669"/>
    <property type="project" value="UniProtKB-UniPathway"/>
</dbReference>
<dbReference type="GO" id="GO:0005996">
    <property type="term" value="P:monosaccharide metabolic process"/>
    <property type="evidence" value="ECO:0000318"/>
    <property type="project" value="GO_Central"/>
</dbReference>
<dbReference type="CDD" id="cd05247">
    <property type="entry name" value="UDP_G4E_1_SDR_e"/>
    <property type="match status" value="1"/>
</dbReference>
<dbReference type="Gene3D" id="3.40.50.720">
    <property type="entry name" value="NAD(P)-binding Rossmann-like Domain"/>
    <property type="match status" value="1"/>
</dbReference>
<dbReference type="Gene3D" id="3.90.25.10">
    <property type="entry name" value="UDP-galactose 4-epimerase, domain 1"/>
    <property type="match status" value="1"/>
</dbReference>
<dbReference type="InterPro" id="IPR016040">
    <property type="entry name" value="NAD(P)-bd_dom"/>
</dbReference>
<dbReference type="InterPro" id="IPR036291">
    <property type="entry name" value="NAD(P)-bd_dom_sf"/>
</dbReference>
<dbReference type="InterPro" id="IPR005886">
    <property type="entry name" value="UDP_G4E"/>
</dbReference>
<dbReference type="NCBIfam" id="TIGR01179">
    <property type="entry name" value="galE"/>
    <property type="match status" value="1"/>
</dbReference>
<dbReference type="NCBIfam" id="NF007956">
    <property type="entry name" value="PRK10675.1"/>
    <property type="match status" value="1"/>
</dbReference>
<dbReference type="PANTHER" id="PTHR43725">
    <property type="entry name" value="UDP-GLUCOSE 4-EPIMERASE"/>
    <property type="match status" value="1"/>
</dbReference>
<dbReference type="PANTHER" id="PTHR43725:SF47">
    <property type="entry name" value="UDP-GLUCOSE 4-EPIMERASE"/>
    <property type="match status" value="1"/>
</dbReference>
<dbReference type="Pfam" id="PF16363">
    <property type="entry name" value="GDP_Man_Dehyd"/>
    <property type="match status" value="1"/>
</dbReference>
<dbReference type="PRINTS" id="PR01713">
    <property type="entry name" value="NUCEPIMERASE"/>
</dbReference>
<dbReference type="SUPFAM" id="SSF51735">
    <property type="entry name" value="NAD(P)-binding Rossmann-fold domains"/>
    <property type="match status" value="1"/>
</dbReference>
<feature type="chain" id="PRO_0000328225" description="UDP-glucose 4-epimerase">
    <location>
        <begin position="1"/>
        <end position="344"/>
    </location>
</feature>
<feature type="active site" description="Proton acceptor" evidence="1">
    <location>
        <position position="153"/>
    </location>
</feature>
<feature type="binding site" evidence="1">
    <location>
        <begin position="15"/>
        <end position="17"/>
    </location>
    <ligand>
        <name>NAD(+)</name>
        <dbReference type="ChEBI" id="CHEBI:57540"/>
    </ligand>
</feature>
<feature type="binding site" evidence="1">
    <location>
        <begin position="36"/>
        <end position="40"/>
    </location>
    <ligand>
        <name>NAD(+)</name>
        <dbReference type="ChEBI" id="CHEBI:57540"/>
    </ligand>
</feature>
<feature type="binding site" evidence="1">
    <location>
        <begin position="63"/>
        <end position="64"/>
    </location>
    <ligand>
        <name>NAD(+)</name>
        <dbReference type="ChEBI" id="CHEBI:57540"/>
    </ligand>
</feature>
<feature type="binding site" evidence="1">
    <location>
        <position position="85"/>
    </location>
    <ligand>
        <name>NAD(+)</name>
        <dbReference type="ChEBI" id="CHEBI:57540"/>
    </ligand>
</feature>
<feature type="binding site" evidence="1">
    <location>
        <position position="89"/>
    </location>
    <ligand>
        <name>NAD(+)</name>
        <dbReference type="ChEBI" id="CHEBI:57540"/>
    </ligand>
</feature>
<feature type="binding site" evidence="1">
    <location>
        <begin position="129"/>
        <end position="131"/>
    </location>
    <ligand>
        <name>substrate</name>
    </ligand>
</feature>
<feature type="binding site" evidence="1">
    <location>
        <position position="157"/>
    </location>
    <ligand>
        <name>NAD(+)</name>
        <dbReference type="ChEBI" id="CHEBI:57540"/>
    </ligand>
</feature>
<feature type="binding site" evidence="1">
    <location>
        <begin position="181"/>
        <end position="183"/>
    </location>
    <ligand>
        <name>substrate</name>
    </ligand>
</feature>
<feature type="binding site" evidence="1">
    <location>
        <position position="181"/>
    </location>
    <ligand>
        <name>NAD(+)</name>
        <dbReference type="ChEBI" id="CHEBI:57540"/>
    </ligand>
</feature>
<feature type="binding site" evidence="1">
    <location>
        <begin position="202"/>
        <end position="204"/>
    </location>
    <ligand>
        <name>substrate</name>
    </ligand>
</feature>
<feature type="binding site" evidence="1">
    <location>
        <begin position="220"/>
        <end position="222"/>
    </location>
    <ligand>
        <name>substrate</name>
    </ligand>
</feature>
<feature type="binding site" evidence="1">
    <location>
        <position position="235"/>
    </location>
    <ligand>
        <name>substrate</name>
    </ligand>
</feature>
<feature type="binding site" evidence="1">
    <location>
        <begin position="297"/>
        <end position="300"/>
    </location>
    <ligand>
        <name>substrate</name>
    </ligand>
</feature>
<proteinExistence type="evidence at protein level"/>
<keyword id="KW-0119">Carbohydrate metabolism</keyword>
<keyword id="KW-0299">Galactose metabolism</keyword>
<keyword id="KW-0413">Isomerase</keyword>
<keyword id="KW-0520">NAD</keyword>
<keyword id="KW-1185">Reference proteome</keyword>
<reference key="1">
    <citation type="journal article" date="2002" name="Nature">
        <title>Sequence and analysis of chromosome 2 of Dictyostelium discoideum.</title>
        <authorList>
            <person name="Gloeckner G."/>
            <person name="Eichinger L."/>
            <person name="Szafranski K."/>
            <person name="Pachebat J.A."/>
            <person name="Bankier A.T."/>
            <person name="Dear P.H."/>
            <person name="Lehmann R."/>
            <person name="Baumgart C."/>
            <person name="Parra G."/>
            <person name="Abril J.F."/>
            <person name="Guigo R."/>
            <person name="Kumpf K."/>
            <person name="Tunggal B."/>
            <person name="Cox E.C."/>
            <person name="Quail M.A."/>
            <person name="Platzer M."/>
            <person name="Rosenthal A."/>
            <person name="Noegel A.A."/>
        </authorList>
    </citation>
    <scope>NUCLEOTIDE SEQUENCE [LARGE SCALE GENOMIC DNA]</scope>
    <source>
        <strain>AX4</strain>
    </source>
</reference>
<reference key="2">
    <citation type="journal article" date="2005" name="Nature">
        <title>The genome of the social amoeba Dictyostelium discoideum.</title>
        <authorList>
            <person name="Eichinger L."/>
            <person name="Pachebat J.A."/>
            <person name="Gloeckner G."/>
            <person name="Rajandream M.A."/>
            <person name="Sucgang R."/>
            <person name="Berriman M."/>
            <person name="Song J."/>
            <person name="Olsen R."/>
            <person name="Szafranski K."/>
            <person name="Xu Q."/>
            <person name="Tunggal B."/>
            <person name="Kummerfeld S."/>
            <person name="Madera M."/>
            <person name="Konfortov B.A."/>
            <person name="Rivero F."/>
            <person name="Bankier A.T."/>
            <person name="Lehmann R."/>
            <person name="Hamlin N."/>
            <person name="Davies R."/>
            <person name="Gaudet P."/>
            <person name="Fey P."/>
            <person name="Pilcher K."/>
            <person name="Chen G."/>
            <person name="Saunders D."/>
            <person name="Sodergren E.J."/>
            <person name="Davis P."/>
            <person name="Kerhornou A."/>
            <person name="Nie X."/>
            <person name="Hall N."/>
            <person name="Anjard C."/>
            <person name="Hemphill L."/>
            <person name="Bason N."/>
            <person name="Farbrother P."/>
            <person name="Desany B."/>
            <person name="Just E."/>
            <person name="Morio T."/>
            <person name="Rost R."/>
            <person name="Churcher C.M."/>
            <person name="Cooper J."/>
            <person name="Haydock S."/>
            <person name="van Driessche N."/>
            <person name="Cronin A."/>
            <person name="Goodhead I."/>
            <person name="Muzny D.M."/>
            <person name="Mourier T."/>
            <person name="Pain A."/>
            <person name="Lu M."/>
            <person name="Harper D."/>
            <person name="Lindsay R."/>
            <person name="Hauser H."/>
            <person name="James K.D."/>
            <person name="Quiles M."/>
            <person name="Madan Babu M."/>
            <person name="Saito T."/>
            <person name="Buchrieser C."/>
            <person name="Wardroper A."/>
            <person name="Felder M."/>
            <person name="Thangavelu M."/>
            <person name="Johnson D."/>
            <person name="Knights A."/>
            <person name="Loulseged H."/>
            <person name="Mungall K.L."/>
            <person name="Oliver K."/>
            <person name="Price C."/>
            <person name="Quail M.A."/>
            <person name="Urushihara H."/>
            <person name="Hernandez J."/>
            <person name="Rabbinowitsch E."/>
            <person name="Steffen D."/>
            <person name="Sanders M."/>
            <person name="Ma J."/>
            <person name="Kohara Y."/>
            <person name="Sharp S."/>
            <person name="Simmonds M.N."/>
            <person name="Spiegler S."/>
            <person name="Tivey A."/>
            <person name="Sugano S."/>
            <person name="White B."/>
            <person name="Walker D."/>
            <person name="Woodward J.R."/>
            <person name="Winckler T."/>
            <person name="Tanaka Y."/>
            <person name="Shaulsky G."/>
            <person name="Schleicher M."/>
            <person name="Weinstock G.M."/>
            <person name="Rosenthal A."/>
            <person name="Cox E.C."/>
            <person name="Chisholm R.L."/>
            <person name="Gibbs R.A."/>
            <person name="Loomis W.F."/>
            <person name="Platzer M."/>
            <person name="Kay R.R."/>
            <person name="Williams J.G."/>
            <person name="Dear P.H."/>
            <person name="Noegel A.A."/>
            <person name="Barrell B.G."/>
            <person name="Kuspa A."/>
        </authorList>
    </citation>
    <scope>NUCLEOTIDE SEQUENCE [LARGE SCALE GENOMIC DNA]</scope>
    <source>
        <strain>AX4</strain>
    </source>
</reference>
<reference key="3">
    <citation type="journal article" date="1971" name="J. Biol. Chem.">
        <title>Uridine diphosphate galactose-4-epimerase, a developmentally regulated enzyme in the cellular slime mold Dictyostelium discoideum.</title>
        <authorList>
            <person name="Telser A."/>
            <person name="Sussman M."/>
        </authorList>
    </citation>
    <scope>CHARACTERIZATION</scope>
    <scope>DEVELOPMENTAL STAGE</scope>
    <scope>BIOPHYSICOCHEMICAL PROPERTIES</scope>
    <source>
        <strain>NC-4</strain>
    </source>
</reference>
<sequence>MEPIDDRIMVTGGAGYIGSHTVIELIEAGYTPVIVDNLSNSSLEAIKRVESITGKEIEFHHVDIMNEKALDEIFETGNIRSVIHFAGLKAVGESNKLPLKYYNNNIAGTLTLLNLMDKHRVKKLVFSSSATVYGDPHTVPITEDFPLSATNPYGRTKLYVEGILQDLCASDPEWNCIMLRYFNPVGAHPSGLIGEDPKDIPNNLMPYVTQTAIGKRPILSIFGNDYNTPDGTGVRDFIHVVDLAKGHISALSSLHSKKQGCVAYNLGTGRGYSVLEMVGALKQASHKEIPYQIVSRRKGDVASSFADPSKALKELGWKATHNQDDMCRDAWKWQSLNPNGYSDS</sequence>
<name>GALE_DICDI</name>
<gene>
    <name type="primary">galE</name>
    <name type="ORF">DDB_G0275295</name>
</gene>
<organism>
    <name type="scientific">Dictyostelium discoideum</name>
    <name type="common">Social amoeba</name>
    <dbReference type="NCBI Taxonomy" id="44689"/>
    <lineage>
        <taxon>Eukaryota</taxon>
        <taxon>Amoebozoa</taxon>
        <taxon>Evosea</taxon>
        <taxon>Eumycetozoa</taxon>
        <taxon>Dictyostelia</taxon>
        <taxon>Dictyosteliales</taxon>
        <taxon>Dictyosteliaceae</taxon>
        <taxon>Dictyostelium</taxon>
    </lineage>
</organism>
<evidence type="ECO:0000250" key="1">
    <source>
        <dbReference type="UniProtKB" id="Q14376"/>
    </source>
</evidence>
<evidence type="ECO:0000269" key="2">
    <source>
    </source>
</evidence>
<evidence type="ECO:0000303" key="3">
    <source>
    </source>
</evidence>
<evidence type="ECO:0000305" key="4"/>
<protein>
    <recommendedName>
        <fullName evidence="3">UDP-glucose 4-epimerase</fullName>
        <ecNumber evidence="3">5.1.3.2</ecNumber>
    </recommendedName>
    <alternativeName>
        <fullName evidence="3">Galactowaldenase</fullName>
    </alternativeName>
    <alternativeName>
        <fullName evidence="1">UDP-N-acetylglucosamine 4-epimerase</fullName>
        <shortName evidence="1">UDP-GlcNAc 4-epimerase</shortName>
        <ecNumber evidence="1">5.1.3.7</ecNumber>
    </alternativeName>
    <alternativeName>
        <fullName evidence="1">UDP-galactosamine 4-epimerase</fullName>
        <shortName evidence="1">UDP-GalNAc 4-epimerase</shortName>
    </alternativeName>
    <alternativeName>
        <fullName evidence="3">UDP-galactose 4-epimerase</fullName>
    </alternativeName>
</protein>
<comment type="function">
    <text evidence="1">Catalyzes two distinct but analogous reactions: the reversible epimerization of UDP-glucose to UDP-galactose and the reversible epimerization of UDP-N-acetylglucosamine to UDP-N-acetylgalactosamine. The reaction with UDP-Gal plays a critical role in the Leloir pathway of galactose catabolism in which galactose is converted to the glycolytic intermediate glucose 6-phosphate. It contributes to the catabolism of dietary galactose and enables the endogenous biosynthesis of both UDP-Gal and UDP-GalNAc when exogenous sources are limited. Both UDP-sugar interconversions are important in the synthesis of glycoproteins and glycolipids.</text>
</comment>
<comment type="catalytic activity">
    <reaction evidence="1">
        <text>UDP-alpha-D-glucose = UDP-alpha-D-galactose</text>
        <dbReference type="Rhea" id="RHEA:22168"/>
        <dbReference type="ChEBI" id="CHEBI:58885"/>
        <dbReference type="ChEBI" id="CHEBI:66914"/>
        <dbReference type="EC" id="5.1.3.2"/>
    </reaction>
</comment>
<comment type="catalytic activity">
    <reaction evidence="1">
        <text>UDP-N-acetyl-alpha-D-glucosamine = UDP-N-acetyl-alpha-D-galactosamine</text>
        <dbReference type="Rhea" id="RHEA:20517"/>
        <dbReference type="ChEBI" id="CHEBI:57705"/>
        <dbReference type="ChEBI" id="CHEBI:67138"/>
        <dbReference type="EC" id="5.1.3.7"/>
    </reaction>
</comment>
<comment type="cofactor">
    <cofactor evidence="1">
        <name>NAD(+)</name>
        <dbReference type="ChEBI" id="CHEBI:57540"/>
    </cofactor>
</comment>
<comment type="biophysicochemical properties">
    <phDependence>
        <text evidence="2">Optimum pH is 7.9.</text>
    </phDependence>
</comment>
<comment type="pathway">
    <text>Carbohydrate metabolism; galactose metabolism.</text>
</comment>
<comment type="subunit">
    <text evidence="1">Homodimer.</text>
</comment>
<comment type="developmental stage">
    <text evidence="2">Expressed in prestalk cells, between 16 and 21 hours. Expression peaks at 18.5 hours.</text>
</comment>
<comment type="miscellaneous">
    <text>After the expression has peaked the enzyme is released to the surrounding media.</text>
</comment>
<comment type="similarity">
    <text evidence="4">Belongs to the NAD(P)-dependent epimerase/dehydratase family.</text>
</comment>
<accession>Q553X7</accession>
<accession>Q86I53</accession>